<proteinExistence type="evidence at protein level"/>
<gene>
    <name type="primary">C1</name>
</gene>
<organism>
    <name type="scientific">Escherichia phage P1</name>
    <name type="common">Bacteriophage P1</name>
    <dbReference type="NCBI Taxonomy" id="2886926"/>
    <lineage>
        <taxon>Viruses</taxon>
        <taxon>Duplodnaviria</taxon>
        <taxon>Heunggongvirae</taxon>
        <taxon>Uroviricota</taxon>
        <taxon>Caudoviricetes</taxon>
        <taxon>Punavirus</taxon>
        <taxon>Punavirus P1</taxon>
    </lineage>
</organism>
<feature type="chain" id="PRO_0000165238" description="Repressor protein C1">
    <location>
        <begin position="1"/>
        <end position="283"/>
    </location>
</feature>
<feature type="DNA-binding region" description="H-T-H motif" evidence="1">
    <location>
        <begin position="30"/>
        <end position="49"/>
    </location>
</feature>
<feature type="region of interest" description="Disordered" evidence="2">
    <location>
        <begin position="254"/>
        <end position="283"/>
    </location>
</feature>
<feature type="sequence variant" description="In mutant P1c1.100.">
    <original>I</original>
    <variation>S</variation>
    <location>
        <position position="55"/>
    </location>
</feature>
<accession>P13121</accession>
<name>RPC1_BPP1</name>
<sequence length="283" mass="32515">MINYVYGEQLYQEFVSFRDLFLKKAVARAQHVDAASDGRPVRPVVVLPFKETDSIQAEIDKWTLMARELEQYPDLNIPKTILYPVPNILRGVRKVTTYQTEAVNSVNMTAGRIIHLIDKDIRIQKSAGINEHSAKYIENLEATKELMKQYPEDEKFRMRVHGFSETMLRVHYISSSPNYNDGKSVSYHVLLCGVFICDETLRDGIIINGEFEKAKFSLYDSIEPIICDRWPQAKIYRLADIENVKKQIAITREEKKVKSAASVTRSRKTKKGQPVNDNPESAQ</sequence>
<organismHost>
    <name type="scientific">Enterobacteriaceae</name>
    <dbReference type="NCBI Taxonomy" id="543"/>
</organismHost>
<keyword id="KW-0903">Direct protein sequencing</keyword>
<keyword id="KW-0238">DNA-binding</keyword>
<keyword id="KW-0678">Repressor</keyword>
<keyword id="KW-0804">Transcription</keyword>
<keyword id="KW-0805">Transcription regulation</keyword>
<dbReference type="EMBL" id="X16005">
    <property type="protein sequence ID" value="CAA34143.1"/>
    <property type="molecule type" value="Genomic_DNA"/>
</dbReference>
<dbReference type="EMBL" id="X06561">
    <property type="protein sequence ID" value="CAA29807.1"/>
    <property type="molecule type" value="Genomic_DNA"/>
</dbReference>
<dbReference type="PIR" id="S06182">
    <property type="entry name" value="S06182"/>
</dbReference>
<dbReference type="GO" id="GO:0003677">
    <property type="term" value="F:DNA binding"/>
    <property type="evidence" value="ECO:0007669"/>
    <property type="project" value="UniProtKB-KW"/>
</dbReference>
<dbReference type="InterPro" id="IPR053501">
    <property type="entry name" value="Lysogenic_reg_DNA-binding"/>
</dbReference>
<dbReference type="InterPro" id="IPR016726">
    <property type="entry name" value="Repressor_C1"/>
</dbReference>
<dbReference type="NCBIfam" id="NF041318">
    <property type="entry name" value="phage_rep_C1"/>
    <property type="match status" value="1"/>
</dbReference>
<dbReference type="PIRSF" id="PIRSF018461">
    <property type="entry name" value="Phage_repressor_C1"/>
    <property type="match status" value="1"/>
</dbReference>
<protein>
    <recommendedName>
        <fullName>Repressor protein C1</fullName>
    </recommendedName>
</protein>
<evidence type="ECO:0000255" key="1"/>
<evidence type="ECO:0000256" key="2">
    <source>
        <dbReference type="SAM" id="MobiDB-lite"/>
    </source>
</evidence>
<comment type="function">
    <text>Sequence-specific DNA-binding protein required for the establishment and maintenance of lysogeny. This protein recognizes the sequence 5'-ATTTATTAGAGCA[AT]T-3'. Binding to the operator DNA of c1 repressor is sensitive to N-ethylmaleimide.</text>
</comment>
<comment type="miscellaneous">
    <text>Thermolability of the mutant P1c1.100 seems to be due to an alteration in the C-terminal half of the repressor.</text>
</comment>
<reference key="1">
    <citation type="journal article" date="1989" name="Nucleic Acids Res.">
        <title>The c1 genes of P1 and P7.</title>
        <authorList>
            <person name="Osborne F.A."/>
            <person name="Stovall S.R."/>
            <person name="Baumstark B.R."/>
        </authorList>
    </citation>
    <scope>NUCLEOTIDE SEQUENCE [GENOMIC DNA]</scope>
    <scope>PARTIAL PROTEIN SEQUENCE</scope>
    <source>
        <strain>KC</strain>
    </source>
</reference>
<reference key="2">
    <citation type="journal article" date="1987" name="J. Mol. Biol.">
        <title>Characterization of the binding sites of c1 repressor of bacteriophage P1. Evidence for multiple asymmetric sites.</title>
        <authorList>
            <person name="Eliason J.L."/>
            <person name="Sternberg N."/>
        </authorList>
    </citation>
    <scope>NUCLEOTIDE SEQUENCE [GENOMIC DNA] OF 1-75</scope>
</reference>
<reference key="3">
    <citation type="journal article" date="1989" name="Nucleic Acids Res.">
        <title>The c1 repressor of bacteriophage P1 operator-repressor interaction of wild-type and mutant repressor proteins.</title>
        <authorList>
            <person name="Heinrich J."/>
            <person name="Riedel H.D."/>
            <person name="Baumstark B.R."/>
            <person name="Kimura M."/>
            <person name="Schuster H."/>
        </authorList>
    </citation>
    <scope>PROTEIN SEQUENCE OF 1-6; 25-42; 51-63; 68-77; 80-89; 91-93; 95-107; 123-143; 149-182; 203-212; 235-242; 247-255 AND 257-267</scope>
    <scope>CHARACTERIZATION</scope>
    <scope>TEMPERATURE-SENSITIVE MUTANTS P1C1/100 AND P1C1/162</scope>
</reference>